<sequence>MASKRWCFTLNYKTAVERESFISLFSRDELNYFVCGDETAPTTNQKHLQGYVSLKKMIRLGGLKKKFGYRAHWEIAKGDDFQNRDYCTKETLISEIGAPVKKGSNQRKIMDLYLQDPEEMQLKDPDTALRCNAKRLRIEYCSSFAVISLRPWQSELHRVLMAEPDDRTIIWVYGSDGGEGKSTFAKELIKYGWFYTAGGKTQDILYMYAQDPERNIAFDVPRCSSEMMNYQAMEMLKNRVFASTKYRPVDLCVRKKVHLIVFANVSPDPTKISEDRIVIINC</sequence>
<reference key="1">
    <citation type="journal article" date="1998" name="J. Gen. Virol.">
        <title>Ten distinct circular ssDNA components, four of which encode putative replication-associated proteins, are associated with the faba bean necrotic yellows virus genome.</title>
        <authorList>
            <person name="Katul L."/>
            <person name="Timchenko T."/>
            <person name="Gronenborn B."/>
            <person name="Vetten H.J."/>
        </authorList>
    </citation>
    <scope>NUCLEOTIDE SEQUENCE [GENOMIC DNA]</scope>
</reference>
<evidence type="ECO:0000250" key="1"/>
<evidence type="ECO:0000255" key="2"/>
<evidence type="ECO:0000255" key="3">
    <source>
        <dbReference type="PROSITE-ProRule" id="PRU01364"/>
    </source>
</evidence>
<evidence type="ECO:0000305" key="4"/>
<feature type="chain" id="PRO_0000378518" description="Para-Rep C1">
    <location>
        <begin position="1"/>
        <end position="282"/>
    </location>
</feature>
<feature type="domain" description="CRESS-DNA virus Rep endonuclease" evidence="3">
    <location>
        <begin position="1"/>
        <end position="99"/>
    </location>
</feature>
<feature type="short sequence motif" description="RCR-1" evidence="3">
    <location>
        <begin position="7"/>
        <end position="10"/>
    </location>
</feature>
<feature type="short sequence motif" description="RCR-2" evidence="3">
    <location>
        <begin position="47"/>
        <end position="49"/>
    </location>
</feature>
<feature type="short sequence motif" description="Nuclear localization signal" evidence="2">
    <location>
        <begin position="56"/>
        <end position="77"/>
    </location>
</feature>
<feature type="short sequence motif" description="RCR-3" evidence="3">
    <location>
        <begin position="86"/>
        <end position="89"/>
    </location>
</feature>
<feature type="active site" description="For DNA cleavage activity" evidence="3">
    <location>
        <position position="86"/>
    </location>
</feature>
<feature type="binding site" evidence="2">
    <location>
        <position position="38"/>
    </location>
    <ligand>
        <name>a divalent metal cation</name>
        <dbReference type="ChEBI" id="CHEBI:60240"/>
    </ligand>
</feature>
<feature type="binding site" evidence="2">
    <location>
        <position position="47"/>
    </location>
    <ligand>
        <name>a divalent metal cation</name>
        <dbReference type="ChEBI" id="CHEBI:60240"/>
    </ligand>
</feature>
<feature type="binding site" evidence="2">
    <location>
        <position position="94"/>
    </location>
    <ligand>
        <name>a divalent metal cation</name>
        <dbReference type="ChEBI" id="CHEBI:60240"/>
    </ligand>
</feature>
<feature type="binding site" evidence="1">
    <location>
        <begin position="174"/>
        <end position="182"/>
    </location>
    <ligand>
        <name>ATP</name>
        <dbReference type="ChEBI" id="CHEBI:30616"/>
    </ligand>
</feature>
<organism>
    <name type="scientific">Faba bean necrotic yellows C11 alphasatellite</name>
    <name type="common">FBNYC11A</name>
    <dbReference type="NCBI Taxonomy" id="1453081"/>
    <lineage>
        <taxon>Viruses</taxon>
        <taxon>Viruses incertae sedis</taxon>
        <taxon>Alphasatellitidae</taxon>
        <taxon>Nanoalphasatellitinae</taxon>
    </lineage>
</organism>
<gene>
    <name type="primary">C1</name>
    <name type="ORF">ORF1</name>
</gene>
<dbReference type="EC" id="2.7.7.-"/>
<dbReference type="EC" id="3.1.21.-"/>
<dbReference type="EC" id="3.6.1.-"/>
<dbReference type="EMBL" id="AJ005968">
    <property type="protein sequence ID" value="CAA06791.1"/>
    <property type="molecule type" value="Genomic_DNA"/>
</dbReference>
<dbReference type="SMR" id="O91254"/>
<dbReference type="KEGG" id="vg:993371"/>
<dbReference type="Proteomes" id="UP001508047">
    <property type="component" value="Segment"/>
</dbReference>
<dbReference type="GO" id="GO:0042025">
    <property type="term" value="C:host cell nucleus"/>
    <property type="evidence" value="ECO:0007669"/>
    <property type="project" value="UniProtKB-SubCell"/>
</dbReference>
<dbReference type="GO" id="GO:0005524">
    <property type="term" value="F:ATP binding"/>
    <property type="evidence" value="ECO:0007669"/>
    <property type="project" value="UniProtKB-KW"/>
</dbReference>
<dbReference type="GO" id="GO:0016887">
    <property type="term" value="F:ATP hydrolysis activity"/>
    <property type="evidence" value="ECO:0007669"/>
    <property type="project" value="RHEA"/>
</dbReference>
<dbReference type="GO" id="GO:0003677">
    <property type="term" value="F:DNA binding"/>
    <property type="evidence" value="ECO:0007669"/>
    <property type="project" value="UniProtKB-KW"/>
</dbReference>
<dbReference type="GO" id="GO:0004519">
    <property type="term" value="F:endonuclease activity"/>
    <property type="evidence" value="ECO:0007669"/>
    <property type="project" value="UniProtKB-KW"/>
</dbReference>
<dbReference type="GO" id="GO:0046872">
    <property type="term" value="F:metal ion binding"/>
    <property type="evidence" value="ECO:0007669"/>
    <property type="project" value="UniProtKB-KW"/>
</dbReference>
<dbReference type="GO" id="GO:0016779">
    <property type="term" value="F:nucleotidyltransferase activity"/>
    <property type="evidence" value="ECO:0007669"/>
    <property type="project" value="UniProtKB-KW"/>
</dbReference>
<dbReference type="GO" id="GO:0003723">
    <property type="term" value="F:RNA binding"/>
    <property type="evidence" value="ECO:0007669"/>
    <property type="project" value="InterPro"/>
</dbReference>
<dbReference type="GO" id="GO:0003724">
    <property type="term" value="F:RNA helicase activity"/>
    <property type="evidence" value="ECO:0007669"/>
    <property type="project" value="InterPro"/>
</dbReference>
<dbReference type="GO" id="GO:0006260">
    <property type="term" value="P:DNA replication"/>
    <property type="evidence" value="ECO:0007669"/>
    <property type="project" value="UniProtKB-KW"/>
</dbReference>
<dbReference type="Gene3D" id="3.40.1310.20">
    <property type="match status" value="1"/>
</dbReference>
<dbReference type="InterPro" id="IPR049912">
    <property type="entry name" value="CRESS_DNA_REP"/>
</dbReference>
<dbReference type="InterPro" id="IPR000605">
    <property type="entry name" value="Helicase_SF3_ssDNA/RNA_vir"/>
</dbReference>
<dbReference type="Pfam" id="PF00910">
    <property type="entry name" value="RNA_helicase"/>
    <property type="match status" value="1"/>
</dbReference>
<dbReference type="Pfam" id="PF02407">
    <property type="entry name" value="Viral_Rep"/>
    <property type="match status" value="1"/>
</dbReference>
<dbReference type="PROSITE" id="PS52020">
    <property type="entry name" value="CRESS_DNA_REP"/>
    <property type="match status" value="1"/>
</dbReference>
<comment type="function">
    <text>Initiates and terminates the replication only of its own subviral DNA molecule. The closed circular ssDNA genome is first converted to a superhelical dsDNA. Rep binds a specific hairpin at the genome origin of replication. Introduces an endonucleolytic nick within the intergenic region of the genome, thereby initiating the rolling circle replication (RCR). Following cleavage, binds covalently to the 5'-phosphate of DNA as a tyrosyl ester. The cleavage gives rise to a free 3'-OH that serves as a primer for the cellular DNA polymerase. The polymerase synthesizes the (+) strand DNA by rolling circle mechanism. After one round of replication, a Rep-catalyzed nucleotidyl transfer reaction releases a circular single-stranded virus genome, thereby terminating the replication. Displays origin-specific DNA cleavage, nucleotidyl transferase, ATPase and helicase activities.</text>
</comment>
<comment type="catalytic activity">
    <reaction>
        <text>ATP + H2O = ADP + phosphate + H(+)</text>
        <dbReference type="Rhea" id="RHEA:13065"/>
        <dbReference type="ChEBI" id="CHEBI:15377"/>
        <dbReference type="ChEBI" id="CHEBI:15378"/>
        <dbReference type="ChEBI" id="CHEBI:30616"/>
        <dbReference type="ChEBI" id="CHEBI:43474"/>
        <dbReference type="ChEBI" id="CHEBI:456216"/>
    </reaction>
</comment>
<comment type="cofactor">
    <cofactor evidence="1">
        <name>Mg(2+)</name>
        <dbReference type="ChEBI" id="CHEBI:18420"/>
    </cofactor>
    <cofactor evidence="1">
        <name>Mn(2+)</name>
        <dbReference type="ChEBI" id="CHEBI:29035"/>
    </cofactor>
    <text evidence="1">Divalent metal cations, possibly Mg(2+) or Mn(2+).</text>
</comment>
<comment type="subunit">
    <text evidence="1 4">Homooligomer (Potential). Rep binds to repeated DNA motifs (iterons) (By similarity).</text>
</comment>
<comment type="subcellular location">
    <subcellularLocation>
        <location evidence="4">Host nucleus</location>
    </subcellularLocation>
</comment>
<comment type="domain">
    <text>There are 3 rolling circle replication (RCR) motifs. RCR-2 is probably involved in metal coordination. RCR-3 is required for phosphodiester bond cleavage for initiation of RCR.</text>
</comment>
<comment type="miscellaneous">
    <text>The genome of nanoviruses is composed of six to eight segments. In addition, some isolates contain subviral DNAs.</text>
</comment>
<comment type="similarity">
    <text evidence="4">Belongs to the nanoviridea/circoviridae replication-associated protein family.</text>
</comment>
<comment type="caution">
    <text evidence="4">This protein is encoded by a subviral DNA that is not present in all isolates of the virus.</text>
</comment>
<proteinExistence type="inferred from homology"/>
<name>REP1_FBN11</name>
<accession>O91254</accession>
<protein>
    <recommendedName>
        <fullName>Para-Rep C1</fullName>
        <shortName>Rep1</shortName>
        <ecNumber>2.7.7.-</ecNumber>
        <ecNumber>3.1.21.-</ecNumber>
        <ecNumber>3.6.1.-</ecNumber>
    </recommendedName>
    <alternativeName>
        <fullName>ATP-dependent helicase C1</fullName>
    </alternativeName>
    <alternativeName>
        <fullName>Replication-associated protein of non-essential DNA C1</fullName>
    </alternativeName>
</protein>
<keyword id="KW-0067">ATP-binding</keyword>
<keyword id="KW-0190">Covalent protein-DNA linkage</keyword>
<keyword id="KW-0235">DNA replication</keyword>
<keyword id="KW-0238">DNA-binding</keyword>
<keyword id="KW-0255">Endonuclease</keyword>
<keyword id="KW-0347">Helicase</keyword>
<keyword id="KW-1048">Host nucleus</keyword>
<keyword id="KW-0378">Hydrolase</keyword>
<keyword id="KW-0479">Metal-binding</keyword>
<keyword id="KW-0511">Multifunctional enzyme</keyword>
<keyword id="KW-0540">Nuclease</keyword>
<keyword id="KW-0547">Nucleotide-binding</keyword>
<keyword id="KW-0548">Nucleotidyltransferase</keyword>
<keyword id="KW-0808">Transferase</keyword>